<reference key="1">
    <citation type="submission" date="1999-11" db="EMBL/GenBank/DDBJ databases">
        <title>Study of streptomycin resistance in Streptococcus gordonii.</title>
        <authorList>
            <person name="Vidyasanker R."/>
            <person name="Hruby D.E."/>
        </authorList>
    </citation>
    <scope>NUCLEOTIDE SEQUENCE [GENOMIC DNA]</scope>
    <scope>VARIANT THR-56</scope>
</reference>
<reference key="2">
    <citation type="journal article" date="2007" name="J. Bacteriol.">
        <title>Genome-wide transcriptional changes in Streptococcus gordonii in response to competence signaling peptide.</title>
        <authorList>
            <person name="Vickerman M.M."/>
            <person name="Iobst S."/>
            <person name="Jesionowski A.M."/>
            <person name="Gill S.R."/>
        </authorList>
    </citation>
    <scope>NUCLEOTIDE SEQUENCE [LARGE SCALE GENOMIC DNA]</scope>
    <source>
        <strain>Challis / ATCC 35105 / BCRC 15272 / CH1 / DL1 / V288</strain>
    </source>
</reference>
<evidence type="ECO:0000250" key="1"/>
<evidence type="ECO:0000255" key="2">
    <source>
        <dbReference type="HAMAP-Rule" id="MF_00403"/>
    </source>
</evidence>
<evidence type="ECO:0000256" key="3">
    <source>
        <dbReference type="SAM" id="MobiDB-lite"/>
    </source>
</evidence>
<evidence type="ECO:0000269" key="4">
    <source ref="1"/>
</evidence>
<evidence type="ECO:0000305" key="5"/>
<organism>
    <name type="scientific">Streptococcus gordonii (strain Challis / ATCC 35105 / BCRC 15272 / CH1 / DL1 / V288)</name>
    <dbReference type="NCBI Taxonomy" id="467705"/>
    <lineage>
        <taxon>Bacteria</taxon>
        <taxon>Bacillati</taxon>
        <taxon>Bacillota</taxon>
        <taxon>Bacilli</taxon>
        <taxon>Lactobacillales</taxon>
        <taxon>Streptococcaceae</taxon>
        <taxon>Streptococcus</taxon>
    </lineage>
</organism>
<keyword id="KW-0488">Methylation</keyword>
<keyword id="KW-1185">Reference proteome</keyword>
<keyword id="KW-0687">Ribonucleoprotein</keyword>
<keyword id="KW-0689">Ribosomal protein</keyword>
<keyword id="KW-0694">RNA-binding</keyword>
<keyword id="KW-0699">rRNA-binding</keyword>
<keyword id="KW-0820">tRNA-binding</keyword>
<accession>Q9F0R4</accession>
<accession>A8AUR4</accession>
<accession>Q9F0R3</accession>
<proteinExistence type="inferred from homology"/>
<dbReference type="EMBL" id="AF207697">
    <property type="protein sequence ID" value="AAG35707.1"/>
    <property type="molecule type" value="Genomic_DNA"/>
</dbReference>
<dbReference type="EMBL" id="AF207698">
    <property type="protein sequence ID" value="AAG35708.1"/>
    <property type="molecule type" value="Genomic_DNA"/>
</dbReference>
<dbReference type="EMBL" id="CP000725">
    <property type="protein sequence ID" value="ABV10215.1"/>
    <property type="molecule type" value="Genomic_DNA"/>
</dbReference>
<dbReference type="RefSeq" id="WP_008808225.1">
    <property type="nucleotide sequence ID" value="NC_009785.1"/>
</dbReference>
<dbReference type="SMR" id="Q9F0R4"/>
<dbReference type="STRING" id="467705.SGO_0204"/>
<dbReference type="GeneID" id="93788610"/>
<dbReference type="KEGG" id="sgo:SGO_0204"/>
<dbReference type="eggNOG" id="COG0048">
    <property type="taxonomic scope" value="Bacteria"/>
</dbReference>
<dbReference type="HOGENOM" id="CLU_104295_1_2_9"/>
<dbReference type="Proteomes" id="UP000001131">
    <property type="component" value="Chromosome"/>
</dbReference>
<dbReference type="GO" id="GO:0015935">
    <property type="term" value="C:small ribosomal subunit"/>
    <property type="evidence" value="ECO:0007669"/>
    <property type="project" value="InterPro"/>
</dbReference>
<dbReference type="GO" id="GO:0019843">
    <property type="term" value="F:rRNA binding"/>
    <property type="evidence" value="ECO:0007669"/>
    <property type="project" value="UniProtKB-UniRule"/>
</dbReference>
<dbReference type="GO" id="GO:0003735">
    <property type="term" value="F:structural constituent of ribosome"/>
    <property type="evidence" value="ECO:0007669"/>
    <property type="project" value="InterPro"/>
</dbReference>
<dbReference type="GO" id="GO:0000049">
    <property type="term" value="F:tRNA binding"/>
    <property type="evidence" value="ECO:0007669"/>
    <property type="project" value="UniProtKB-UniRule"/>
</dbReference>
<dbReference type="GO" id="GO:0006412">
    <property type="term" value="P:translation"/>
    <property type="evidence" value="ECO:0007669"/>
    <property type="project" value="UniProtKB-UniRule"/>
</dbReference>
<dbReference type="CDD" id="cd03368">
    <property type="entry name" value="Ribosomal_S12"/>
    <property type="match status" value="1"/>
</dbReference>
<dbReference type="FunFam" id="2.40.50.140:FF:000001">
    <property type="entry name" value="30S ribosomal protein S12"/>
    <property type="match status" value="1"/>
</dbReference>
<dbReference type="Gene3D" id="2.40.50.140">
    <property type="entry name" value="Nucleic acid-binding proteins"/>
    <property type="match status" value="1"/>
</dbReference>
<dbReference type="HAMAP" id="MF_00403_B">
    <property type="entry name" value="Ribosomal_uS12_B"/>
    <property type="match status" value="1"/>
</dbReference>
<dbReference type="InterPro" id="IPR012340">
    <property type="entry name" value="NA-bd_OB-fold"/>
</dbReference>
<dbReference type="InterPro" id="IPR006032">
    <property type="entry name" value="Ribosomal_uS12"/>
</dbReference>
<dbReference type="InterPro" id="IPR005679">
    <property type="entry name" value="Ribosomal_uS12_bac"/>
</dbReference>
<dbReference type="NCBIfam" id="TIGR00981">
    <property type="entry name" value="rpsL_bact"/>
    <property type="match status" value="1"/>
</dbReference>
<dbReference type="PANTHER" id="PTHR11652">
    <property type="entry name" value="30S RIBOSOMAL PROTEIN S12 FAMILY MEMBER"/>
    <property type="match status" value="1"/>
</dbReference>
<dbReference type="Pfam" id="PF00164">
    <property type="entry name" value="Ribosom_S12_S23"/>
    <property type="match status" value="1"/>
</dbReference>
<dbReference type="PIRSF" id="PIRSF002133">
    <property type="entry name" value="Ribosomal_S12/S23"/>
    <property type="match status" value="1"/>
</dbReference>
<dbReference type="PRINTS" id="PR01034">
    <property type="entry name" value="RIBOSOMALS12"/>
</dbReference>
<dbReference type="SUPFAM" id="SSF50249">
    <property type="entry name" value="Nucleic acid-binding proteins"/>
    <property type="match status" value="1"/>
</dbReference>
<dbReference type="PROSITE" id="PS00055">
    <property type="entry name" value="RIBOSOMAL_S12"/>
    <property type="match status" value="1"/>
</dbReference>
<sequence>MPTINQLVRKPRKSKVEKSKSPALNVGYNSLKRVPTNESAPQKRGVATRVGTMTPKKPNSALRKFARVRLSNLIEVTAYIPGIGHNLQEHSVVLLRGGRVKDLPGVRYHIVRGALDTAGVTDRKQGRSKYGTKKPKA</sequence>
<protein>
    <recommendedName>
        <fullName evidence="2">Small ribosomal subunit protein uS12</fullName>
    </recommendedName>
    <alternativeName>
        <fullName evidence="5">30S ribosomal protein S12</fullName>
    </alternativeName>
</protein>
<name>RS12_STRGC</name>
<gene>
    <name evidence="2" type="primary">rpsL</name>
    <name type="ordered locus">SGO_0204</name>
</gene>
<feature type="chain" id="PRO_0000146322" description="Small ribosomal subunit protein uS12">
    <location>
        <begin position="1"/>
        <end position="137"/>
    </location>
</feature>
<feature type="region of interest" description="Disordered" evidence="3">
    <location>
        <begin position="1"/>
        <end position="57"/>
    </location>
</feature>
<feature type="modified residue" description="3-methylthioaspartic acid" evidence="1">
    <location>
        <position position="102"/>
    </location>
</feature>
<feature type="sequence variant" description="In strain: GP204; streptomycin-resistant." evidence="4">
    <original>K</original>
    <variation>T</variation>
    <location>
        <position position="56"/>
    </location>
</feature>
<comment type="function">
    <text evidence="2">With S4 and S5 plays an important role in translational accuracy.</text>
</comment>
<comment type="function">
    <text evidence="2">Interacts with and stabilizes bases of the 16S rRNA that are involved in tRNA selection in the A site and with the mRNA backbone. Located at the interface of the 30S and 50S subunits, it traverses the body of the 30S subunit contacting proteins on the other side and probably holding the rRNA structure together. The combined cluster of proteins S8, S12 and S17 appears to hold together the shoulder and platform of the 30S subunit.</text>
</comment>
<comment type="subunit">
    <text evidence="2">Part of the 30S ribosomal subunit. Contacts proteins S8 and S17. May interact with IF1 in the 30S initiation complex.</text>
</comment>
<comment type="similarity">
    <text evidence="2">Belongs to the universal ribosomal protein uS12 family.</text>
</comment>